<protein>
    <recommendedName>
        <fullName evidence="1">Envelope glycoprotein H</fullName>
        <shortName evidence="1">gH</shortName>
    </recommendedName>
</protein>
<accession>P03231</accession>
<accession>Q6LBU6</accession>
<accession>Q777C0</accession>
<organismHost>
    <name type="scientific">Homo sapiens</name>
    <name type="common">Human</name>
    <dbReference type="NCBI Taxonomy" id="9606"/>
</organismHost>
<dbReference type="EMBL" id="V01555">
    <property type="protein sequence ID" value="CAA24797.1"/>
    <property type="molecule type" value="Genomic_DNA"/>
</dbReference>
<dbReference type="EMBL" id="AJ507799">
    <property type="protein sequence ID" value="CAD53450.1"/>
    <property type="molecule type" value="Genomic_DNA"/>
</dbReference>
<dbReference type="EMBL" id="X07532">
    <property type="protein sequence ID" value="CAE82041.1"/>
    <property type="molecule type" value="Genomic_DNA"/>
</dbReference>
<dbReference type="PIR" id="A93065">
    <property type="entry name" value="QQBE6L"/>
</dbReference>
<dbReference type="PIR" id="S00736">
    <property type="entry name" value="S00736"/>
</dbReference>
<dbReference type="RefSeq" id="YP_401700.1">
    <property type="nucleotide sequence ID" value="NC_007605.1"/>
</dbReference>
<dbReference type="PDB" id="3PHF">
    <property type="method" value="X-ray"/>
    <property type="resolution" value="3.58 A"/>
    <property type="chains" value="1/3/5/A/C/E/G/I/K/M/O/Q/S/U/W/Y=20-672"/>
</dbReference>
<dbReference type="PDB" id="5T1D">
    <property type="method" value="X-ray"/>
    <property type="resolution" value="3.10 A"/>
    <property type="chains" value="A=20-674"/>
</dbReference>
<dbReference type="PDB" id="5W0K">
    <property type="method" value="X-ray"/>
    <property type="resolution" value="3.10 A"/>
    <property type="chains" value="A/C=20-679"/>
</dbReference>
<dbReference type="PDB" id="7CZE">
    <property type="method" value="X-ray"/>
    <property type="resolution" value="3.00 A"/>
    <property type="chains" value="A/C/E/G=18-674"/>
</dbReference>
<dbReference type="PDB" id="7S07">
    <property type="method" value="X-ray"/>
    <property type="resolution" value="3.29 A"/>
    <property type="chains" value="A=18-674"/>
</dbReference>
<dbReference type="PDB" id="7S1B">
    <property type="method" value="X-ray"/>
    <property type="resolution" value="3.03 A"/>
    <property type="chains" value="A=18-674"/>
</dbReference>
<dbReference type="PDB" id="7YP1">
    <property type="method" value="EM"/>
    <property type="resolution" value="3.54 A"/>
    <property type="chains" value="A=20-255"/>
</dbReference>
<dbReference type="PDB" id="7YP2">
    <property type="method" value="EM"/>
    <property type="resolution" value="3.52 A"/>
    <property type="chains" value="A=361-674"/>
</dbReference>
<dbReference type="PDB" id="8TNN">
    <property type="method" value="X-ray"/>
    <property type="resolution" value="3.36 A"/>
    <property type="chains" value="A/D=17-674"/>
</dbReference>
<dbReference type="PDB" id="8TNT">
    <property type="method" value="X-ray"/>
    <property type="resolution" value="3.15 A"/>
    <property type="chains" value="A=19-674"/>
</dbReference>
<dbReference type="PDBsum" id="3PHF"/>
<dbReference type="PDBsum" id="5T1D"/>
<dbReference type="PDBsum" id="5W0K"/>
<dbReference type="PDBsum" id="7CZE"/>
<dbReference type="PDBsum" id="7S07"/>
<dbReference type="PDBsum" id="7S1B"/>
<dbReference type="PDBsum" id="7YP1"/>
<dbReference type="PDBsum" id="7YP2"/>
<dbReference type="PDBsum" id="8TNN"/>
<dbReference type="PDBsum" id="8TNT"/>
<dbReference type="SMR" id="P03231"/>
<dbReference type="DIP" id="DIP-49016N"/>
<dbReference type="IntAct" id="P03231">
    <property type="interactions" value="2"/>
</dbReference>
<dbReference type="GlyCosmos" id="P03231">
    <property type="glycosylation" value="5 sites, No reported glycans"/>
</dbReference>
<dbReference type="iPTMnet" id="P03231"/>
<dbReference type="ABCD" id="P03231">
    <property type="antibodies" value="3 sequenced antibodies"/>
</dbReference>
<dbReference type="DNASU" id="3783742"/>
<dbReference type="GeneID" id="3783742"/>
<dbReference type="KEGG" id="vg:3783742"/>
<dbReference type="SIGNOR" id="P03231"/>
<dbReference type="EvolutionaryTrace" id="P03231"/>
<dbReference type="Proteomes" id="UP000153037">
    <property type="component" value="Segment"/>
</dbReference>
<dbReference type="GO" id="GO:0044175">
    <property type="term" value="C:host cell endosome membrane"/>
    <property type="evidence" value="ECO:0007669"/>
    <property type="project" value="UniProtKB-SubCell"/>
</dbReference>
<dbReference type="GO" id="GO:0020002">
    <property type="term" value="C:host cell plasma membrane"/>
    <property type="evidence" value="ECO:0007669"/>
    <property type="project" value="UniProtKB-SubCell"/>
</dbReference>
<dbReference type="GO" id="GO:0016020">
    <property type="term" value="C:membrane"/>
    <property type="evidence" value="ECO:0007669"/>
    <property type="project" value="UniProtKB-KW"/>
</dbReference>
<dbReference type="GO" id="GO:0019031">
    <property type="term" value="C:viral envelope"/>
    <property type="evidence" value="ECO:0007669"/>
    <property type="project" value="UniProtKB-KW"/>
</dbReference>
<dbReference type="GO" id="GO:0055036">
    <property type="term" value="C:virion membrane"/>
    <property type="evidence" value="ECO:0007669"/>
    <property type="project" value="UniProtKB-SubCell"/>
</dbReference>
<dbReference type="GO" id="GO:0019064">
    <property type="term" value="P:fusion of virus membrane with host plasma membrane"/>
    <property type="evidence" value="ECO:0007669"/>
    <property type="project" value="UniProtKB-KW"/>
</dbReference>
<dbReference type="GO" id="GO:0046718">
    <property type="term" value="P:symbiont entry into host cell"/>
    <property type="evidence" value="ECO:0007669"/>
    <property type="project" value="UniProtKB-KW"/>
</dbReference>
<dbReference type="Gene3D" id="2.60.40.3190">
    <property type="entry name" value="Herpesvirus glycoprotein H, C-terminal domain"/>
    <property type="match status" value="1"/>
</dbReference>
<dbReference type="Gene3D" id="3.90.380.20">
    <property type="entry name" value="Herpesvirus glycoprotein H, domain D-II"/>
    <property type="match status" value="1"/>
</dbReference>
<dbReference type="HAMAP" id="MF_04033">
    <property type="entry name" value="HSV_GH"/>
    <property type="match status" value="1"/>
</dbReference>
<dbReference type="InterPro" id="IPR003493">
    <property type="entry name" value="Herpes_gH"/>
</dbReference>
<dbReference type="InterPro" id="IPR035305">
    <property type="entry name" value="Herpes_glycoH_C"/>
</dbReference>
<dbReference type="InterPro" id="IPR038172">
    <property type="entry name" value="Herpes_glycoH_C_sf"/>
</dbReference>
<dbReference type="Pfam" id="PF17488">
    <property type="entry name" value="Herpes_glycoH_C"/>
    <property type="match status" value="1"/>
</dbReference>
<dbReference type="Pfam" id="PF02489">
    <property type="entry name" value="Herpes_glycop_H"/>
    <property type="match status" value="1"/>
</dbReference>
<organism>
    <name type="scientific">Epstein-Barr virus (strain B95-8)</name>
    <name type="common">HHV-4</name>
    <name type="synonym">Human herpesvirus 4</name>
    <dbReference type="NCBI Taxonomy" id="10377"/>
    <lineage>
        <taxon>Viruses</taxon>
        <taxon>Duplodnaviria</taxon>
        <taxon>Heunggongvirae</taxon>
        <taxon>Peploviricota</taxon>
        <taxon>Herviviricetes</taxon>
        <taxon>Herpesvirales</taxon>
        <taxon>Orthoherpesviridae</taxon>
        <taxon>Gammaherpesvirinae</taxon>
        <taxon>Lymphocryptovirus</taxon>
        <taxon>Lymphocryptovirus humangamma4</taxon>
        <taxon>Epstein-Barr virus (strain GD1)</taxon>
    </lineage>
</organism>
<keyword id="KW-0002">3D-structure</keyword>
<keyword id="KW-1015">Disulfide bond</keyword>
<keyword id="KW-1169">Fusion of virus membrane with host cell membrane</keyword>
<keyword id="KW-1168">Fusion of virus membrane with host membrane</keyword>
<keyword id="KW-0325">Glycoprotein</keyword>
<keyword id="KW-1032">Host cell membrane</keyword>
<keyword id="KW-1039">Host endosome</keyword>
<keyword id="KW-1043">Host membrane</keyword>
<keyword id="KW-0472">Membrane</keyword>
<keyword id="KW-1185">Reference proteome</keyword>
<keyword id="KW-0730">Sialic acid</keyword>
<keyword id="KW-0732">Signal</keyword>
<keyword id="KW-0812">Transmembrane</keyword>
<keyword id="KW-1133">Transmembrane helix</keyword>
<keyword id="KW-0261">Viral envelope protein</keyword>
<keyword id="KW-1162">Viral penetration into host cytoplasm</keyword>
<keyword id="KW-0946">Virion</keyword>
<keyword id="KW-1160">Virus entry into host cell</keyword>
<gene>
    <name evidence="1" type="primary">gH</name>
    <name type="ORF">BXLF2</name>
</gene>
<feature type="signal peptide" evidence="1">
    <location>
        <begin position="1"/>
        <end position="18"/>
    </location>
</feature>
<feature type="chain" id="PRO_0000436649" description="Envelope glycoprotein H" evidence="1">
    <location>
        <begin position="19"/>
        <end position="706"/>
    </location>
</feature>
<feature type="topological domain" description="Virion surface" evidence="1">
    <location>
        <begin position="19"/>
        <end position="682"/>
    </location>
</feature>
<feature type="transmembrane region" description="Helical" evidence="1">
    <location>
        <begin position="683"/>
        <end position="703"/>
    </location>
</feature>
<feature type="topological domain" description="Intravirion" evidence="1">
    <location>
        <begin position="704"/>
        <end position="706"/>
    </location>
</feature>
<feature type="region of interest" description="Interaction with gL" evidence="1">
    <location>
        <begin position="165"/>
        <end position="229"/>
    </location>
</feature>
<feature type="glycosylation site" description="N-linked (GlcNAc...) asparagine; by host" evidence="1 3">
    <location>
        <position position="60"/>
    </location>
</feature>
<feature type="glycosylation site" description="N-linked (GlcNAc...) asparagine; by host" evidence="1 3">
    <location>
        <position position="435"/>
    </location>
</feature>
<feature type="glycosylation site" description="N-linked (GlcNAc...) asparagine; by host" evidence="1 3">
    <location>
        <position position="549"/>
    </location>
</feature>
<feature type="glycosylation site" description="N-linked (GlcNAc...) asparagine; by host" evidence="1 3">
    <location>
        <position position="604"/>
    </location>
</feature>
<feature type="glycosylation site" description="N-linked (GlcNAc...) asparagine; by host" evidence="1 3">
    <location>
        <position position="664"/>
    </location>
</feature>
<feature type="disulfide bond" evidence="3">
    <location>
        <begin position="120"/>
        <end position="312"/>
    </location>
</feature>
<feature type="disulfide bond" evidence="3">
    <location>
        <begin position="278"/>
        <end position="335"/>
    </location>
</feature>
<feature type="disulfide bond" evidence="3">
    <location>
        <begin position="454"/>
        <end position="478"/>
    </location>
</feature>
<feature type="disulfide bond" evidence="3">
    <location>
        <begin position="534"/>
        <end position="587"/>
    </location>
</feature>
<feature type="disulfide bond" evidence="3">
    <location>
        <begin position="612"/>
        <end position="615"/>
    </location>
</feature>
<feature type="sequence conflict" description="In Ref. 3; CAE82041." evidence="7" ref="3">
    <original>TVGYPKAGVY</original>
    <variation>GAPGGRAGPP</variation>
    <location>
        <begin position="380"/>
        <end position="389"/>
    </location>
</feature>
<feature type="strand" evidence="9">
    <location>
        <begin position="22"/>
        <end position="29"/>
    </location>
</feature>
<feature type="strand" evidence="9">
    <location>
        <begin position="32"/>
        <end position="39"/>
    </location>
</feature>
<feature type="helix" evidence="9">
    <location>
        <begin position="40"/>
        <end position="46"/>
    </location>
</feature>
<feature type="helix" evidence="9">
    <location>
        <begin position="52"/>
        <end position="58"/>
    </location>
</feature>
<feature type="turn" evidence="9">
    <location>
        <begin position="59"/>
        <end position="62"/>
    </location>
</feature>
<feature type="helix" evidence="9">
    <location>
        <begin position="65"/>
        <end position="72"/>
    </location>
</feature>
<feature type="strand" evidence="11">
    <location>
        <begin position="81"/>
        <end position="83"/>
    </location>
</feature>
<feature type="strand" evidence="9">
    <location>
        <begin position="100"/>
        <end position="102"/>
    </location>
</feature>
<feature type="strand" evidence="9">
    <location>
        <begin position="104"/>
        <end position="106"/>
    </location>
</feature>
<feature type="strand" evidence="9">
    <location>
        <begin position="115"/>
        <end position="117"/>
    </location>
</feature>
<feature type="strand" evidence="9">
    <location>
        <begin position="119"/>
        <end position="122"/>
    </location>
</feature>
<feature type="helix" evidence="9">
    <location>
        <begin position="123"/>
        <end position="130"/>
    </location>
</feature>
<feature type="strand" evidence="9">
    <location>
        <begin position="135"/>
        <end position="138"/>
    </location>
</feature>
<feature type="turn" evidence="9">
    <location>
        <begin position="142"/>
        <end position="147"/>
    </location>
</feature>
<feature type="strand" evidence="9">
    <location>
        <begin position="151"/>
        <end position="154"/>
    </location>
</feature>
<feature type="strand" evidence="9">
    <location>
        <begin position="156"/>
        <end position="162"/>
    </location>
</feature>
<feature type="turn" evidence="9">
    <location>
        <begin position="163"/>
        <end position="166"/>
    </location>
</feature>
<feature type="strand" evidence="9">
    <location>
        <begin position="167"/>
        <end position="173"/>
    </location>
</feature>
<feature type="strand" evidence="9">
    <location>
        <begin position="175"/>
        <end position="185"/>
    </location>
</feature>
<feature type="strand" evidence="9">
    <location>
        <begin position="187"/>
        <end position="189"/>
    </location>
</feature>
<feature type="strand" evidence="9">
    <location>
        <begin position="191"/>
        <end position="200"/>
    </location>
</feature>
<feature type="helix" evidence="9">
    <location>
        <begin position="201"/>
        <end position="203"/>
    </location>
</feature>
<feature type="helix" evidence="9">
    <location>
        <begin position="213"/>
        <end position="216"/>
    </location>
</feature>
<feature type="strand" evidence="9">
    <location>
        <begin position="217"/>
        <end position="221"/>
    </location>
</feature>
<feature type="strand" evidence="9">
    <location>
        <begin position="224"/>
        <end position="231"/>
    </location>
</feature>
<feature type="helix" evidence="9">
    <location>
        <begin position="232"/>
        <end position="239"/>
    </location>
</feature>
<feature type="helix" evidence="9">
    <location>
        <begin position="246"/>
        <end position="255"/>
    </location>
</feature>
<feature type="helix" evidence="9">
    <location>
        <begin position="258"/>
        <end position="274"/>
    </location>
</feature>
<feature type="turn" evidence="9">
    <location>
        <begin position="275"/>
        <end position="279"/>
    </location>
</feature>
<feature type="helix" evidence="9">
    <location>
        <begin position="285"/>
        <end position="306"/>
    </location>
</feature>
<feature type="strand" evidence="9">
    <location>
        <begin position="310"/>
        <end position="314"/>
    </location>
</feature>
<feature type="helix" evidence="9">
    <location>
        <begin position="315"/>
        <end position="335"/>
    </location>
</feature>
<feature type="strand" evidence="9">
    <location>
        <begin position="339"/>
        <end position="342"/>
    </location>
</feature>
<feature type="helix" evidence="9">
    <location>
        <begin position="346"/>
        <end position="356"/>
    </location>
</feature>
<feature type="helix" evidence="9">
    <location>
        <begin position="361"/>
        <end position="363"/>
    </location>
</feature>
<feature type="helix" evidence="10">
    <location>
        <begin position="364"/>
        <end position="366"/>
    </location>
</feature>
<feature type="helix" evidence="9">
    <location>
        <begin position="371"/>
        <end position="381"/>
    </location>
</feature>
<feature type="helix" evidence="9">
    <location>
        <begin position="383"/>
        <end position="385"/>
    </location>
</feature>
<feature type="helix" evidence="9">
    <location>
        <begin position="392"/>
        <end position="405"/>
    </location>
</feature>
<feature type="helix" evidence="9">
    <location>
        <begin position="415"/>
        <end position="432"/>
    </location>
</feature>
<feature type="strand" evidence="8">
    <location>
        <begin position="434"/>
        <end position="436"/>
    </location>
</feature>
<feature type="helix" evidence="9">
    <location>
        <begin position="440"/>
        <end position="453"/>
    </location>
</feature>
<feature type="helix" evidence="9">
    <location>
        <begin position="456"/>
        <end position="468"/>
    </location>
</feature>
<feature type="helix" evidence="9">
    <location>
        <begin position="471"/>
        <end position="473"/>
    </location>
</feature>
<feature type="helix" evidence="9">
    <location>
        <begin position="477"/>
        <end position="480"/>
    </location>
</feature>
<feature type="strand" evidence="8">
    <location>
        <begin position="481"/>
        <end position="483"/>
    </location>
</feature>
<feature type="helix" evidence="9">
    <location>
        <begin position="488"/>
        <end position="492"/>
    </location>
</feature>
<feature type="strand" evidence="8">
    <location>
        <begin position="499"/>
        <end position="501"/>
    </location>
</feature>
<feature type="helix" evidence="9">
    <location>
        <begin position="503"/>
        <end position="515"/>
    </location>
</feature>
<feature type="turn" evidence="9">
    <location>
        <begin position="520"/>
        <end position="522"/>
    </location>
</feature>
<feature type="strand" evidence="9">
    <location>
        <begin position="524"/>
        <end position="527"/>
    </location>
</feature>
<feature type="turn" evidence="9">
    <location>
        <begin position="530"/>
        <end position="533"/>
    </location>
</feature>
<feature type="strand" evidence="9">
    <location>
        <begin position="540"/>
        <end position="547"/>
    </location>
</feature>
<feature type="strand" evidence="9">
    <location>
        <begin position="550"/>
        <end position="556"/>
    </location>
</feature>
<feature type="strand" evidence="10">
    <location>
        <begin position="566"/>
        <end position="568"/>
    </location>
</feature>
<feature type="strand" evidence="9">
    <location>
        <begin position="572"/>
        <end position="575"/>
    </location>
</feature>
<feature type="strand" evidence="9">
    <location>
        <begin position="578"/>
        <end position="583"/>
    </location>
</feature>
<feature type="strand" evidence="12">
    <location>
        <begin position="589"/>
        <end position="591"/>
    </location>
</feature>
<feature type="turn" evidence="9">
    <location>
        <begin position="613"/>
        <end position="616"/>
    </location>
</feature>
<feature type="strand" evidence="9">
    <location>
        <begin position="618"/>
        <end position="623"/>
    </location>
</feature>
<feature type="turn" evidence="9">
    <location>
        <begin position="624"/>
        <end position="626"/>
    </location>
</feature>
<feature type="strand" evidence="9">
    <location>
        <begin position="627"/>
        <end position="633"/>
    </location>
</feature>
<feature type="helix" evidence="9">
    <location>
        <begin position="637"/>
        <end position="645"/>
    </location>
</feature>
<feature type="turn" evidence="8">
    <location>
        <begin position="646"/>
        <end position="648"/>
    </location>
</feature>
<feature type="strand" evidence="9">
    <location>
        <begin position="656"/>
        <end position="661"/>
    </location>
</feature>
<feature type="strand" evidence="9">
    <location>
        <begin position="663"/>
        <end position="665"/>
    </location>
</feature>
<feature type="strand" evidence="9">
    <location>
        <begin position="667"/>
        <end position="670"/>
    </location>
</feature>
<evidence type="ECO:0000255" key="1">
    <source>
        <dbReference type="HAMAP-Rule" id="MF_04033"/>
    </source>
</evidence>
<evidence type="ECO:0000269" key="2">
    <source>
    </source>
</evidence>
<evidence type="ECO:0000269" key="3">
    <source>
    </source>
</evidence>
<evidence type="ECO:0000269" key="4">
    <source>
    </source>
</evidence>
<evidence type="ECO:0000269" key="5">
    <source>
    </source>
</evidence>
<evidence type="ECO:0000269" key="6">
    <source>
    </source>
</evidence>
<evidence type="ECO:0000305" key="7"/>
<evidence type="ECO:0007829" key="8">
    <source>
        <dbReference type="PDB" id="5T1D"/>
    </source>
</evidence>
<evidence type="ECO:0007829" key="9">
    <source>
        <dbReference type="PDB" id="7CZE"/>
    </source>
</evidence>
<evidence type="ECO:0007829" key="10">
    <source>
        <dbReference type="PDB" id="7S07"/>
    </source>
</evidence>
<evidence type="ECO:0007829" key="11">
    <source>
        <dbReference type="PDB" id="8TNN"/>
    </source>
</evidence>
<evidence type="ECO:0007829" key="12">
    <source>
        <dbReference type="PDB" id="8TNT"/>
    </source>
</evidence>
<name>GH_EBVB9</name>
<sequence length="706" mass="78322">MQLLCVFCLVLLWEVGAASLSEVKLHLDIEGHASHYTIPWTELMAKVPGLSPEALWREANVTEDLASMLNRYKLIYKTSGTLGIALAEPVDIPAVSEGSMQVDASKVHPGVISGLNSPACMLSAPLEKQLFYYIGTMLPNTRPHSYVFYQLRCHLSYVALSINGDKFQYTGAMTSKFLMGTYKRVTEKGDEHVLSLVFGKTKDLPDLRGPFSYPSLTSAQSGDYSLVIVTTFVHYANFHNYFVPNLKDMFSRAVTMTAASYARYVLQKLVLLEMKGGCREPELDTETLTTMFEVSVAFFKVGHAVGETGNGCVDLRWLAKSFFELTVLKDIIGICYGATVKGMQSYGLERLAAMLMATVKMEELGHLTTEKQEYALRLATVGYPKAGVYSGLIGGATSVLLSAYNRHPLFQPLHTVMRETLFIGSHVVLRELRLNVTTQGPNLALYQLLSTALCSALEIGEVLRGLALGTESGLFSPCYLSLRFDLTRDKLLSMAPQEATLDQAAVSNAVDGFLGRLSLEREDRDAWHLPAYKCVDRLDKVLMIIPLINVTFIISSDREVRGSALYEASTTYLSSSLFLSPVIMNKCSQGAVAGEPRQIPKIQNFTRTQKSCIFCGFALLSYDEKEGLETTTYITSQEVQNSILSSNYFDFDNLHVHYLLLTTNGTVMEIAGLYEERAHVVLAIILYFIAFALGIFLVHKIVMFFL</sequence>
<proteinExistence type="evidence at protein level"/>
<comment type="function">
    <text evidence="1 2 5 6">The heterodimer glycoprotein H-glycoprotein L is required for the fusion of viral and plasma membranes leading to virus entry into the host cell. Following initial binding to host receptor, membrane fusion is mediated by the fusion machinery composed of gB and the heterodimer gH/gL. May also be involved in the fusion between the virion envelope and the outer nuclear membrane during virion morphogenesis. The heterodimer gH/gL targets also host EPHA2 to promote viral entry.</text>
</comment>
<comment type="subunit">
    <text evidence="1 4 6">Interacts with glycoprotein L (gL); this interaction is necessary for the correct processing and cell surface expression of gH. The heterodimer gH/gL seems to interact with gB trimers during fusion. The heterodimer gH/gL interacts with host EPHA2 to facilitate virus internalization and fusion (PubMed:29292384). Interacts with glycoprotein 42/BZLF2 (PubMed:27929061).</text>
</comment>
<comment type="interaction">
    <interactant intactId="EBI-15815779">
        <id>P03231</id>
    </interactant>
    <interactant intactId="EBI-15897767">
        <id>P03212</id>
        <label>gL</label>
    </interactant>
    <organismsDiffer>false</organismsDiffer>
    <experiments>3</experiments>
</comment>
<comment type="subcellular location">
    <subcellularLocation>
        <location evidence="1">Virion membrane</location>
        <topology evidence="1">Single-pass type I membrane protein</topology>
    </subcellularLocation>
    <subcellularLocation>
        <location evidence="1">Host cell membrane</location>
        <topology evidence="1">Single-pass type I membrane protein</topology>
    </subcellularLocation>
    <subcellularLocation>
        <location evidence="1">Host endosome membrane</location>
        <topology evidence="1">Single-pass type I membrane protein</topology>
    </subcellularLocation>
    <text evidence="1">During virion morphogenesis, this protein probably accumulates in the endosomes and trans-Golgi where secondary envelopment occurs. It is probably transported to the cell surface from where it is endocytosed and directed to the trans-Golgi network (TGN).</text>
</comment>
<comment type="PTM">
    <text evidence="1">N-glycosylated, O-glycosylated, and sialylated.</text>
</comment>
<comment type="similarity">
    <text evidence="1">Belongs to the herpesviridae glycoprotein H family.</text>
</comment>
<reference key="1">
    <citation type="journal article" date="1984" name="Nature">
        <title>DNA sequence and expression of the B95-8 Epstein-Barr virus genome.</title>
        <authorList>
            <person name="Baer R."/>
            <person name="Bankier A.T."/>
            <person name="Biggin M.D."/>
            <person name="Deininger P.L."/>
            <person name="Farrell P.J."/>
            <person name="Gibson T.J."/>
            <person name="Hatfull G."/>
            <person name="Hudson G.S."/>
            <person name="Satchwell S.C."/>
            <person name="Seguin C."/>
            <person name="Tuffnell P.S."/>
            <person name="Barrell B.G."/>
        </authorList>
    </citation>
    <scope>NUCLEOTIDE SEQUENCE [LARGE SCALE GENOMIC DNA]</scope>
</reference>
<reference key="2">
    <citation type="journal article" date="1983" name="Mol. Biol. Med.">
        <title>Sequence analysis of the 17,166 base-pair EcoRI fragment C of B95-8 Epstein-Barr virus.</title>
        <authorList>
            <person name="Bankier A.T."/>
            <person name="Deininger P.L."/>
            <person name="Farrell P.J."/>
            <person name="Barrell B.G."/>
        </authorList>
    </citation>
    <scope>NUCLEOTIDE SEQUENCE [GENOMIC DNA] OF 1-116</scope>
</reference>
<reference key="3">
    <citation type="journal article" date="1988" name="Nucleic Acids Res.">
        <title>The analysis of EBV proteins which are antigenic in vivo.</title>
        <authorList>
            <person name="Walls D."/>
            <person name="Perricaudet M."/>
            <person name="Gannon F."/>
        </authorList>
    </citation>
    <scope>NUCLEOTIDE SEQUENCE [GENOMIC DNA] OF 338-389</scope>
</reference>
<reference key="4">
    <citation type="journal article" date="2003" name="Virology">
        <title>Updated Epstein-Barr virus (EBV) DNA sequence and analysis of a promoter for the BART (CST, BARF0) RNAs of EBV.</title>
        <authorList>
            <person name="de Jesus O."/>
            <person name="Smith P.R."/>
            <person name="Spender L.C."/>
            <person name="Elgueta Karstegl C."/>
            <person name="Niller H.H."/>
            <person name="Huang D."/>
            <person name="Farrell P.J."/>
        </authorList>
    </citation>
    <scope>GENOME REANNOTATION</scope>
</reference>
<reference key="5">
    <citation type="journal article" date="1988" name="J. Virol.">
        <title>Identification of the Epstein-Barr virus gp85 gene.</title>
        <authorList>
            <person name="Heineman T."/>
            <person name="Gong M."/>
            <person name="Sample J."/>
            <person name="Kieff E."/>
        </authorList>
    </citation>
    <scope>CHARACTERIZATION</scope>
</reference>
<reference key="6">
    <citation type="journal article" date="1998" name="J. Virol.">
        <title>Epstein-Barr virus uses different complexes of glycoproteins gH and gL to infect B lymphocytes and epithelial cells.</title>
        <authorList>
            <person name="Wang X."/>
            <person name="Kenyon W.J."/>
            <person name="Li Q."/>
            <person name="Mullberg J."/>
            <person name="Hutt-Fletcher L.M."/>
        </authorList>
    </citation>
    <scope>INTERACTION WITH GP25 AND GP42</scope>
</reference>
<reference key="7">
    <citation type="journal article" date="2000" name="Virology">
        <title>Epstein-Barr virus lacking glycoprotein gp85 cannot infect B cells and epithelial cells.</title>
        <authorList>
            <person name="Oda T."/>
            <person name="Imai S."/>
            <person name="Chiba S."/>
            <person name="Takada K."/>
        </authorList>
    </citation>
    <scope>FUNCTION</scope>
</reference>
<reference key="8">
    <citation type="journal article" date="2004" name="Proc. Natl. Acad. Sci. U.S.A.">
        <title>Proteins of purified Epstein-Barr virus.</title>
        <authorList>
            <person name="Johannsen E."/>
            <person name="Luftig M."/>
            <person name="Chase M.R."/>
            <person name="Weicksel S."/>
            <person name="Cahir-McFarland E."/>
            <person name="Illanes D."/>
            <person name="Sarracino D."/>
            <person name="Kieff E."/>
        </authorList>
    </citation>
    <scope>SUBCELLULAR LOCATION</scope>
</reference>
<reference key="9">
    <citation type="journal article" date="2018" name="Nat. Microbiol.">
        <title>Ephrin receptor A2 is an epithelial cell receptor for Epstein-Barr virus entry.</title>
        <authorList>
            <person name="Zhang H."/>
            <person name="Li Y."/>
            <person name="Wang H.B."/>
            <person name="Zhang A."/>
            <person name="Chen M.L."/>
            <person name="Fang Z.X."/>
            <person name="Dong X.D."/>
            <person name="Li S.B."/>
            <person name="Du Y."/>
            <person name="Xiong D."/>
            <person name="He J.Y."/>
            <person name="Li M.Z."/>
            <person name="Liu Y.M."/>
            <person name="Zhou A.J."/>
            <person name="Zhong Q."/>
            <person name="Zeng Y.X."/>
            <person name="Kieff E."/>
            <person name="Zhang Z."/>
            <person name="Gewurz B.E."/>
            <person name="Zhao B."/>
            <person name="Zeng M.S."/>
        </authorList>
    </citation>
    <scope>FUNCTION</scope>
    <scope>INTERACTION WITH HOST EPHA2</scope>
</reference>
<reference key="10">
    <citation type="journal article" date="2018" name="Nat. Microbiol.">
        <title>Ephrin receptor A2 is a functional entry receptor for Epstein-Barr virus.</title>
        <authorList>
            <person name="Chen J."/>
            <person name="Sathiyamoorthy K."/>
            <person name="Zhang X."/>
            <person name="Schaller S."/>
            <person name="Perez White B.E."/>
            <person name="Jardetzky T.S."/>
            <person name="Longnecker R."/>
        </authorList>
    </citation>
    <scope>FUNCTION</scope>
    <scope>INTERACTION WITH HOST EPHA2</scope>
</reference>
<reference key="11">
    <citation type="journal article" date="2010" name="Proc. Natl. Acad. Sci. U.S.A.">
        <title>Crystal structure of the Epstein-Barr virus (EBV) glycoprotein H/glycoprotein L (gH/gL) complex.</title>
        <authorList>
            <person name="Matsuura H."/>
            <person name="Kirschner A.N."/>
            <person name="Longnecker R."/>
            <person name="Jardetzky T.S."/>
        </authorList>
    </citation>
    <scope>X-RAY CRYSTALLOGRAPHY (3.58 ANGSTROMS) OF 20-672</scope>
    <scope>DISULFIDE BOND</scope>
    <scope>GLYCOSYLATION AT ASN-60; ASN-435; ASN-549; ASN-604 AND ASN-664</scope>
</reference>
<reference key="12">
    <citation type="journal article" date="2016" name="Nat. Commun.">
        <title>Structural basis for Epstein-Barr virus host cell tropism mediated by gp42 and gHgL entry glycoproteins.</title>
        <authorList>
            <person name="Sathiyamoorthy K."/>
            <person name="Hu Y.X."/>
            <person name="Moehl B.S."/>
            <person name="Chen J."/>
            <person name="Longnecker R."/>
            <person name="Jardetzky T.S."/>
        </authorList>
    </citation>
    <scope>X-RAY CRYSTALLOGRAPHY (3.10 ANGSTROMS) OF 20-674</scope>
    <scope>GLYCOSYLATION AT ASN-60</scope>
    <scope>INTERACTION WITH GLYCOPROTEIN 42/BZLF2</scope>
</reference>
<reference key="13">
    <citation type="journal article" date="2017" name="Proc. Natl. Acad. Sci. U.S.A.">
        <title>Inhibition of EBV-mediated membrane fusion by anti-gHgL antibodies.</title>
        <authorList>
            <person name="Sathiyamoorthy K."/>
            <person name="Jiang J."/>
            <person name="Moehl B.S."/>
            <person name="Chen J."/>
            <person name="Zhou Z.H."/>
            <person name="Longnecker R."/>
            <person name="Jardetzky T.S."/>
        </authorList>
    </citation>
    <scope>X-RAY CRYSTALLOGRAPHY (3.10 ANGSTROMS) OF 20-679</scope>
</reference>